<keyword id="KW-0053">Apoptosis</keyword>
<keyword id="KW-0966">Cell projection</keyword>
<keyword id="KW-1015">Disulfide bond</keyword>
<keyword id="KW-0249">Electron transport</keyword>
<keyword id="KW-0256">Endoplasmic reticulum</keyword>
<keyword id="KW-0274">FAD</keyword>
<keyword id="KW-0285">Flavoprotein</keyword>
<keyword id="KW-0325">Glycoprotein</keyword>
<keyword id="KW-0333">Golgi apparatus</keyword>
<keyword id="KW-0472">Membrane</keyword>
<keyword id="KW-0560">Oxidoreductase</keyword>
<keyword id="KW-0597">Phosphoprotein</keyword>
<keyword id="KW-0676">Redox-active center</keyword>
<keyword id="KW-1185">Reference proteome</keyword>
<keyword id="KW-0964">Secreted</keyword>
<keyword id="KW-0732">Signal</keyword>
<keyword id="KW-0813">Transport</keyword>
<protein>
    <recommendedName>
        <fullName>ERO1-like protein alpha</fullName>
        <shortName>ERO1-L</shortName>
        <shortName>ERO1-L-alpha</shortName>
        <ecNumber evidence="4">1.8.4.-</ecNumber>
    </recommendedName>
    <alternativeName>
        <fullName evidence="4">Endoplasmic reticulum oxidoreductase alpha</fullName>
    </alternativeName>
    <alternativeName>
        <fullName>Endoplasmic reticulum oxidoreductin-1-like protein</fullName>
    </alternativeName>
    <alternativeName>
        <fullName>Oxidoreductin-1-L-alpha</fullName>
    </alternativeName>
</protein>
<dbReference type="EC" id="1.8.4.-" evidence="4"/>
<dbReference type="EMBL" id="EU552934">
    <property type="protein sequence ID" value="ACD13001.1"/>
    <property type="molecule type" value="mRNA"/>
</dbReference>
<dbReference type="RefSeq" id="NP_001131099.1">
    <property type="nucleotide sequence ID" value="NM_001137627.1"/>
</dbReference>
<dbReference type="SMR" id="B6CVD7"/>
<dbReference type="FunCoup" id="B6CVD7">
    <property type="interactions" value="1370"/>
</dbReference>
<dbReference type="STRING" id="9823.ENSSSCP00000051791"/>
<dbReference type="GlyCosmos" id="B6CVD7">
    <property type="glycosylation" value="2 sites, No reported glycans"/>
</dbReference>
<dbReference type="GlyGen" id="B6CVD7">
    <property type="glycosylation" value="2 sites"/>
</dbReference>
<dbReference type="PaxDb" id="9823-ENSSSCP00000005415"/>
<dbReference type="PeptideAtlas" id="B6CVD7"/>
<dbReference type="Ensembl" id="ENSSSCT00015055699.1">
    <property type="protein sequence ID" value="ENSSSCP00015022385.1"/>
    <property type="gene ID" value="ENSSSCG00015040725.1"/>
</dbReference>
<dbReference type="Ensembl" id="ENSSSCT00040027162.1">
    <property type="protein sequence ID" value="ENSSSCP00040011486.1"/>
    <property type="gene ID" value="ENSSSCG00040019923.1"/>
</dbReference>
<dbReference type="Ensembl" id="ENSSSCT00060047212.1">
    <property type="protein sequence ID" value="ENSSSCP00060020226.1"/>
    <property type="gene ID" value="ENSSSCG00060034808.1"/>
</dbReference>
<dbReference type="Ensembl" id="ENSSSCT00070061633.1">
    <property type="protein sequence ID" value="ENSSSCP00070052554.1"/>
    <property type="gene ID" value="ENSSSCG00070030612.1"/>
</dbReference>
<dbReference type="Ensembl" id="ENSSSCT00115017201">
    <property type="protein sequence ID" value="ENSSSCP00115016237"/>
    <property type="gene ID" value="ENSSSCG00115009972"/>
</dbReference>
<dbReference type="GeneID" id="100192435"/>
<dbReference type="KEGG" id="ssc:100192435"/>
<dbReference type="CTD" id="30001"/>
<dbReference type="eggNOG" id="KOG2608">
    <property type="taxonomic scope" value="Eukaryota"/>
</dbReference>
<dbReference type="HOGENOM" id="CLU_023061_2_2_1"/>
<dbReference type="InParanoid" id="B6CVD7"/>
<dbReference type="OMA" id="PCGIRSE"/>
<dbReference type="OrthoDB" id="269384at2759"/>
<dbReference type="TreeFam" id="TF314471"/>
<dbReference type="Reactome" id="R-SSC-3299685">
    <property type="pathway name" value="Detoxification of Reactive Oxygen Species"/>
</dbReference>
<dbReference type="Proteomes" id="UP000008227">
    <property type="component" value="Unplaced"/>
</dbReference>
<dbReference type="Proteomes" id="UP000314985">
    <property type="component" value="Chromosome 1"/>
</dbReference>
<dbReference type="Proteomes" id="UP000694570">
    <property type="component" value="Unplaced"/>
</dbReference>
<dbReference type="Proteomes" id="UP000694571">
    <property type="component" value="Unplaced"/>
</dbReference>
<dbReference type="Proteomes" id="UP000694720">
    <property type="component" value="Unplaced"/>
</dbReference>
<dbReference type="Proteomes" id="UP000694722">
    <property type="component" value="Unplaced"/>
</dbReference>
<dbReference type="Proteomes" id="UP000694723">
    <property type="component" value="Unplaced"/>
</dbReference>
<dbReference type="Proteomes" id="UP000694724">
    <property type="component" value="Unplaced"/>
</dbReference>
<dbReference type="Proteomes" id="UP000694725">
    <property type="component" value="Unplaced"/>
</dbReference>
<dbReference type="Proteomes" id="UP000694726">
    <property type="component" value="Unplaced"/>
</dbReference>
<dbReference type="Proteomes" id="UP000694727">
    <property type="component" value="Unplaced"/>
</dbReference>
<dbReference type="Proteomes" id="UP000694728">
    <property type="component" value="Unplaced"/>
</dbReference>
<dbReference type="GO" id="GO:0030425">
    <property type="term" value="C:dendrite"/>
    <property type="evidence" value="ECO:0007669"/>
    <property type="project" value="UniProtKB-SubCell"/>
</dbReference>
<dbReference type="GO" id="GO:0005783">
    <property type="term" value="C:endoplasmic reticulum"/>
    <property type="evidence" value="ECO:0000250"/>
    <property type="project" value="UniProtKB"/>
</dbReference>
<dbReference type="GO" id="GO:0005789">
    <property type="term" value="C:endoplasmic reticulum membrane"/>
    <property type="evidence" value="ECO:0000318"/>
    <property type="project" value="GO_Central"/>
</dbReference>
<dbReference type="GO" id="GO:0005615">
    <property type="term" value="C:extracellular space"/>
    <property type="evidence" value="ECO:0000250"/>
    <property type="project" value="UniProtKB"/>
</dbReference>
<dbReference type="GO" id="GO:0005796">
    <property type="term" value="C:Golgi lumen"/>
    <property type="evidence" value="ECO:0000250"/>
    <property type="project" value="UniProtKB"/>
</dbReference>
<dbReference type="GO" id="GO:0071949">
    <property type="term" value="F:FAD binding"/>
    <property type="evidence" value="ECO:0007669"/>
    <property type="project" value="InterPro"/>
</dbReference>
<dbReference type="GO" id="GO:0016491">
    <property type="term" value="F:oxidoreductase activity"/>
    <property type="evidence" value="ECO:0000250"/>
    <property type="project" value="UniProtKB"/>
</dbReference>
<dbReference type="GO" id="GO:0015035">
    <property type="term" value="F:protein-disulfide reductase activity"/>
    <property type="evidence" value="ECO:0000318"/>
    <property type="project" value="GO_Central"/>
</dbReference>
<dbReference type="GO" id="GO:0016972">
    <property type="term" value="F:thiol oxidase activity"/>
    <property type="evidence" value="ECO:0007669"/>
    <property type="project" value="InterPro"/>
</dbReference>
<dbReference type="GO" id="GO:0045454">
    <property type="term" value="P:cell redox homeostasis"/>
    <property type="evidence" value="ECO:0000250"/>
    <property type="project" value="UniProtKB"/>
</dbReference>
<dbReference type="GO" id="GO:0070059">
    <property type="term" value="P:intrinsic apoptotic signaling pathway in response to endoplasmic reticulum stress"/>
    <property type="evidence" value="ECO:0000250"/>
    <property type="project" value="UniProtKB"/>
</dbReference>
<dbReference type="GO" id="GO:0006457">
    <property type="term" value="P:protein folding"/>
    <property type="evidence" value="ECO:0000250"/>
    <property type="project" value="UniProtKB"/>
</dbReference>
<dbReference type="GO" id="GO:0034975">
    <property type="term" value="P:protein folding in endoplasmic reticulum"/>
    <property type="evidence" value="ECO:0000318"/>
    <property type="project" value="GO_Central"/>
</dbReference>
<dbReference type="GO" id="GO:0051209">
    <property type="term" value="P:release of sequestered calcium ion into cytosol"/>
    <property type="evidence" value="ECO:0000250"/>
    <property type="project" value="UniProtKB"/>
</dbReference>
<dbReference type="GO" id="GO:0034976">
    <property type="term" value="P:response to endoplasmic reticulum stress"/>
    <property type="evidence" value="ECO:0000250"/>
    <property type="project" value="UniProtKB"/>
</dbReference>
<dbReference type="InterPro" id="IPR007266">
    <property type="entry name" value="Ero1"/>
</dbReference>
<dbReference type="InterPro" id="IPR037192">
    <property type="entry name" value="ERO1-like_sf"/>
</dbReference>
<dbReference type="PANTHER" id="PTHR12613:SF1">
    <property type="entry name" value="ERO1-LIKE PROTEIN ALPHA"/>
    <property type="match status" value="1"/>
</dbReference>
<dbReference type="PANTHER" id="PTHR12613">
    <property type="entry name" value="ERO1-RELATED"/>
    <property type="match status" value="1"/>
</dbReference>
<dbReference type="Pfam" id="PF04137">
    <property type="entry name" value="ERO1"/>
    <property type="match status" value="1"/>
</dbReference>
<dbReference type="PIRSF" id="PIRSF017205">
    <property type="entry name" value="ERO1"/>
    <property type="match status" value="1"/>
</dbReference>
<dbReference type="SUPFAM" id="SSF110019">
    <property type="entry name" value="ERO1-like"/>
    <property type="match status" value="1"/>
</dbReference>
<sequence>MGHRWGFLIVFLGAVGLLGSGYGRQQPSETAAQRCFCQVSGYLDDCTCDVETIDRFNNYRLFPRLQKLLESDYFRYYKVNLKRPCPFWNDINQCGRRDCAVKPCQSDEIPDGIKSASYKYSEEANNLIEECEQAERLGAVDESLSEETQKAVLQWTKHDDSSDNFCEADDIQSPDAEYVDLLLNPERYTGYKGPDAWKIWNVIYEENCFKPQTIKRPLNPLASGQGKSEENTFYSWLEGLCVEKRAFYRLISGLHASINVHLSARYLLQDTWLEKKWGHNITEFQQRFDGILTEGEGPRRLKNLYFLYLIELRALSKVVPFFERPDFQLFTGNKVQDAENKMLLLDILHEIKSFPLHFDENSFFAGDKKEANKLKEDFRLHFRNISRIMDCVGCLKCRLWGKLQTQGLGTALKILFSEKLIANMPESGPSYEFHLTRQEIVSLFNAFGRISTSVKELENFRNLLQNIH</sequence>
<feature type="signal peptide" evidence="5">
    <location>
        <begin position="1"/>
        <end position="23"/>
    </location>
</feature>
<feature type="chain" id="PRO_0000368274" description="ERO1-like protein alpha">
    <location>
        <begin position="24"/>
        <end position="468"/>
    </location>
</feature>
<feature type="binding site" evidence="4">
    <location>
        <position position="187"/>
    </location>
    <ligand>
        <name>FAD</name>
        <dbReference type="ChEBI" id="CHEBI:57692"/>
    </ligand>
</feature>
<feature type="binding site" evidence="4">
    <location>
        <position position="189"/>
    </location>
    <ligand>
        <name>FAD</name>
        <dbReference type="ChEBI" id="CHEBI:57692"/>
    </ligand>
</feature>
<feature type="binding site" evidence="4">
    <location>
        <position position="200"/>
    </location>
    <ligand>
        <name>FAD</name>
        <dbReference type="ChEBI" id="CHEBI:57692"/>
    </ligand>
</feature>
<feature type="binding site" evidence="4">
    <location>
        <position position="252"/>
    </location>
    <ligand>
        <name>FAD</name>
        <dbReference type="ChEBI" id="CHEBI:57692"/>
    </ligand>
</feature>
<feature type="binding site" evidence="4">
    <location>
        <position position="255"/>
    </location>
    <ligand>
        <name>FAD</name>
        <dbReference type="ChEBI" id="CHEBI:57692"/>
    </ligand>
</feature>
<feature type="binding site" evidence="4">
    <location>
        <position position="287"/>
    </location>
    <ligand>
        <name>FAD</name>
        <dbReference type="ChEBI" id="CHEBI:57692"/>
    </ligand>
</feature>
<feature type="binding site" evidence="4">
    <location>
        <position position="300"/>
    </location>
    <ligand>
        <name>FAD</name>
        <dbReference type="ChEBI" id="CHEBI:57692"/>
    </ligand>
</feature>
<feature type="modified residue" description="Phosphoserine" evidence="4">
    <location>
        <position position="106"/>
    </location>
</feature>
<feature type="modified residue" description="Phosphoserine" evidence="4">
    <location>
        <position position="143"/>
    </location>
</feature>
<feature type="modified residue" description="Phosphoserine" evidence="4">
    <location>
        <position position="145"/>
    </location>
</feature>
<feature type="glycosylation site" description="N-linked (GlcNAc...) asparagine" evidence="5">
    <location>
        <position position="280"/>
    </location>
</feature>
<feature type="glycosylation site" description="N-linked (GlcNAc...) asparagine" evidence="5">
    <location>
        <position position="384"/>
    </location>
</feature>
<feature type="disulfide bond" evidence="4">
    <location>
        <begin position="35"/>
        <end position="48"/>
    </location>
</feature>
<feature type="disulfide bond" evidence="4">
    <location>
        <begin position="37"/>
        <end position="46"/>
    </location>
</feature>
<feature type="disulfide bond" evidence="4">
    <location>
        <begin position="85"/>
        <end position="391"/>
    </location>
</feature>
<feature type="disulfide bond" description="Alternate" evidence="4">
    <location>
        <begin position="94"/>
        <end position="131"/>
    </location>
</feature>
<feature type="disulfide bond" description="Redox-active; alternate" evidence="4">
    <location>
        <begin position="94"/>
        <end position="99"/>
    </location>
</feature>
<feature type="disulfide bond" description="Alternate" evidence="4">
    <location>
        <begin position="99"/>
        <end position="104"/>
    </location>
</feature>
<feature type="disulfide bond" evidence="4">
    <location>
        <begin position="208"/>
        <end position="241"/>
    </location>
</feature>
<feature type="disulfide bond" description="Redox-active" evidence="4">
    <location>
        <begin position="394"/>
        <end position="397"/>
    </location>
</feature>
<reference key="1">
    <citation type="submission" date="2008-03" db="EMBL/GenBank/DDBJ databases">
        <authorList>
            <person name="Long Q."/>
            <person name="Yang Z."/>
        </authorList>
    </citation>
    <scope>NUCLEOTIDE SEQUENCE [MRNA]</scope>
</reference>
<proteinExistence type="evidence at transcript level"/>
<accession>B6CVD7</accession>
<evidence type="ECO:0000250" key="1"/>
<evidence type="ECO:0000250" key="2">
    <source>
        <dbReference type="UniProtKB" id="Q8R180"/>
    </source>
</evidence>
<evidence type="ECO:0000250" key="3">
    <source>
        <dbReference type="UniProtKB" id="Q8R4A1"/>
    </source>
</evidence>
<evidence type="ECO:0000250" key="4">
    <source>
        <dbReference type="UniProtKB" id="Q96HE7"/>
    </source>
</evidence>
<evidence type="ECO:0000255" key="5"/>
<evidence type="ECO:0000305" key="6"/>
<organism>
    <name type="scientific">Sus scrofa</name>
    <name type="common">Pig</name>
    <dbReference type="NCBI Taxonomy" id="9823"/>
    <lineage>
        <taxon>Eukaryota</taxon>
        <taxon>Metazoa</taxon>
        <taxon>Chordata</taxon>
        <taxon>Craniata</taxon>
        <taxon>Vertebrata</taxon>
        <taxon>Euteleostomi</taxon>
        <taxon>Mammalia</taxon>
        <taxon>Eutheria</taxon>
        <taxon>Laurasiatheria</taxon>
        <taxon>Artiodactyla</taxon>
        <taxon>Suina</taxon>
        <taxon>Suidae</taxon>
        <taxon>Sus</taxon>
    </lineage>
</organism>
<name>ERO1A_PIG</name>
<gene>
    <name evidence="4" type="primary">ERO1A</name>
    <name type="synonym">ERO1L</name>
</gene>
<comment type="function">
    <text evidence="4">Oxidoreductase involved in disulfide bond formation in the endoplasmic reticulum. Efficiently reoxidizes P4HB/PDI, the enzyme catalyzing protein disulfide formation, in order to allow P4HB to sustain additional rounds of disulfide formation. Following P4HB reoxidation, passes its electrons to molecular oxygen via FAD, leading to the production of reactive oxygen species (ROS) in the cell. Required for the proper folding of immunoglobulins. Plays an important role in ER stress-induced, CHOP-dependent apoptosis by activating the inositol 1,4,5-trisphosphate receptor IP3R1.</text>
</comment>
<comment type="cofactor">
    <cofactor evidence="4">
        <name>FAD</name>
        <dbReference type="ChEBI" id="CHEBI:57692"/>
    </cofactor>
</comment>
<comment type="activity regulation">
    <text evidence="1">Enzyme activity is tightly regulated to prevent the accumulation of reactive oxygen species in the endoplasmic reticulum. Reversibly down-regulated by the formation of disulfide bonds between the active site Cys-94 and Cys-131, and between Cys-99 and Cys-104. Glutathione may be required to regulate its activity in the endoplasmic reticulum (By similarity).</text>
</comment>
<comment type="subunit">
    <text evidence="4">Predominantly monomer. May function both as a monomer and a homodimer. Interacts with PDILT. Interacts with ERP44; the interaction results in retention of ERO1A in the endoplasmic reticulum.</text>
</comment>
<comment type="subcellular location">
    <subcellularLocation>
        <location evidence="4">Endoplasmic reticulum membrane</location>
        <topology evidence="4">Peripheral membrane protein</topology>
        <orientation evidence="4">Lumenal side</orientation>
    </subcellularLocation>
    <subcellularLocation>
        <location evidence="4">Golgi apparatus lumen</location>
    </subcellularLocation>
    <subcellularLocation>
        <location evidence="4">Secreted</location>
    </subcellularLocation>
    <subcellularLocation>
        <location evidence="3">Cell projection</location>
        <location evidence="3">Dendrite</location>
    </subcellularLocation>
    <text evidence="3 4">The association with ERP44 is essential for its retention in the endoplasmic reticulum (By similarity). In neurons, it localizes to dendrites (By similarity).</text>
</comment>
<comment type="PTM">
    <text evidence="1">The Cys-94/Cys-99 and Cys-394/Cys-397 disulfide bonds constitute the redox-active center. The Cys-94/Cys-99 disulfide bond may accept electron from P4HB and funnel them to the active site disulfide Cys-394/Cys-397. The regulatory Cys-99/Cys-104 disulfide bond stabilizes the other regulatory bond Cys-94/Cys-131 (By similarity).</text>
</comment>
<comment type="PTM">
    <text evidence="2 4">Phosphorylated on Ser-145 by FAM20C in the Golgi which increases its enzymatic activity (By similarity). Phosphorylation is induced by lactation (By similarity). It is also induced by hypoxia and reductive stress (By similarity).</text>
</comment>
<comment type="similarity">
    <text evidence="6">Belongs to the EROs family.</text>
</comment>